<reference evidence="5 8" key="1">
    <citation type="journal article" date="2015" name="BMC Genomics">
        <title>Comparative genomics and metabolic profiling of the genus Lysobacter.</title>
        <authorList>
            <person name="de Bruijn I."/>
            <person name="Cheng X."/>
            <person name="de Jager V."/>
            <person name="Exposito R.G."/>
            <person name="Watrous J."/>
            <person name="Patel N."/>
            <person name="Postma J."/>
            <person name="Dorrestein P.C."/>
            <person name="Kobayashi D."/>
            <person name="Raaijmakers J.M."/>
        </authorList>
    </citation>
    <scope>NUCLEOTIDE SEQUENCE [LARGE SCALE GENOMIC DNA]</scope>
    <source>
        <strain>C3</strain>
    </source>
</reference>
<reference evidence="6" key="2">
    <citation type="journal article" date="2017" name="Genome Announc.">
        <title>Draft Genome Sequence and Assembly of a Lysobacter enzymogenes Strain with Biological Control Activity against Root Knot Nematodes.</title>
        <authorList>
            <person name="Hernandez I."/>
            <person name="Fernandez C."/>
        </authorList>
    </citation>
    <scope>NUCLEOTIDE SEQUENCE [LARGE SCALE GENOMIC DNA]</scope>
    <source>
        <strain>B25</strain>
    </source>
</reference>
<reference evidence="7" key="3">
    <citation type="journal article" date="2019" name="Appl. Environ. Microbiol.">
        <title>Interspecies and Intraspecies Signals Synergistically Regulate Lysobacter enzymogenes Twitching Motility.</title>
        <authorList>
            <person name="Feng T."/>
            <person name="Han Y."/>
            <person name="Li B."/>
            <person name="Li Z."/>
            <person name="Yu Y."/>
            <person name="Sun Q."/>
            <person name="Li X."/>
            <person name="Du L."/>
            <person name="Zhang X.H."/>
            <person name="Wang Y."/>
        </authorList>
    </citation>
    <scope>NUCLEOTIDE SEQUENCE [LARGE SCALE GENOMIC DNA]</scope>
    <source>
        <strain>YC36</strain>
    </source>
</reference>
<reference key="4">
    <citation type="journal article" date="2022" name="Science">
        <title>Bacterial gasdermins reveal an ancient mechanism of cell death.</title>
        <authorList>
            <person name="Johnson A.G."/>
            <person name="Wein T."/>
            <person name="Mayer M.L."/>
            <person name="Duncan-Lowey B."/>
            <person name="Yirmiya E."/>
            <person name="Oppenheimer-Shaanan Y."/>
            <person name="Amitai G."/>
            <person name="Sorek R."/>
            <person name="Kranzusch P.J."/>
        </authorList>
    </citation>
    <scope>FUNCTION</scope>
    <scope>MUTAGENESIS OF SER-343</scope>
    <source>
        <strain>YC36</strain>
    </source>
</reference>
<proteinExistence type="evidence at protein level"/>
<evidence type="ECO:0000269" key="1">
    <source>
    </source>
</evidence>
<evidence type="ECO:0000303" key="2">
    <source>
    </source>
</evidence>
<evidence type="ECO:0000305" key="3"/>
<evidence type="ECO:0000305" key="4">
    <source>
    </source>
</evidence>
<evidence type="ECO:0000312" key="5">
    <source>
        <dbReference type="EMBL" id="ALN60085.1"/>
    </source>
</evidence>
<evidence type="ECO:0000312" key="6">
    <source>
        <dbReference type="EMBL" id="OPD63339.1"/>
    </source>
</evidence>
<evidence type="ECO:0000312" key="7">
    <source>
        <dbReference type="EMBL" id="QCW28096.1"/>
    </source>
</evidence>
<evidence type="ECO:0000312" key="8">
    <source>
        <dbReference type="Proteomes" id="UP000061569"/>
    </source>
</evidence>
<comment type="function">
    <text evidence="1">Possibly a dedicated protease for substrate gasdermin bGSDM; cleaves the bGSDM precursor, releasing the pore-forming moiety, which integrates into the membrane and triggers cell death. Involved in defense against bacteriophages. When this probable 4 gene operon (bGSDM-FE772_23060-FE772_23065-FE772_23070) is inserted into E.coli it provides nearly 100-fold protection against phages T5 and T6 and about 8-fold against phage T4. The operon without bGSDM no longer protects against phage.</text>
</comment>
<comment type="similarity">
    <text evidence="3">Belongs to the peptidase S1 family.</text>
</comment>
<sequence>MEQERIRQLAKLLAAGARARDAQAESMMDGGVAAAPAPAGQTLDVVEQALSTPPDDVDETQWRAAREQLLTHAHNGLVKLQRGDLQLDADEGCAMEAVIISDGSRPSFLLCDGEIDPKDPSIETWAGNIAAAQALGIAKLAAAVGRIQPKNGHASRYVGTGTLIDRDAGLILTNYHVIEQAQQNYGVAMTRNGDRLSVDGWLEIDFVGESCSLRTHRFRIVEVALPQGYGSTFHGIDAAVARIEPLPDSPALPDPVPLLSADAAYATGAISSLALIGFPARPSLQDGKDVDWSFVMRVLFGNRFGVKRLAPGQFTLPLGSHALDQGRRAIGHDATTFGGASGSLLMSWLDDRTPSFALHFGGATGVSNYALSFAAERNALSAIGARF</sequence>
<organism>
    <name type="scientific">Lysobacter enzymogenes</name>
    <dbReference type="NCBI Taxonomy" id="69"/>
    <lineage>
        <taxon>Bacteria</taxon>
        <taxon>Pseudomonadati</taxon>
        <taxon>Pseudomonadota</taxon>
        <taxon>Gammaproteobacteria</taxon>
        <taxon>Lysobacterales</taxon>
        <taxon>Lysobacteraceae</taxon>
        <taxon>Lysobacter</taxon>
    </lineage>
</organism>
<accession>A0A0S2DNK1</accession>
<feature type="chain" id="PRO_0000455584" description="Probable serine protease FE772_23060">
    <location>
        <begin position="1"/>
        <end position="387"/>
    </location>
</feature>
<feature type="mutagenesis site" description="4-gene operon still protects against phage." evidence="1">
    <original>S</original>
    <variation>A</variation>
    <location>
        <position position="343"/>
    </location>
</feature>
<keyword id="KW-0051">Antiviral defense</keyword>
<keyword id="KW-0378">Hydrolase</keyword>
<keyword id="KW-0645">Protease</keyword>
<keyword id="KW-0720">Serine protease</keyword>
<protein>
    <recommendedName>
        <fullName evidence="3">Probable serine protease FE772_23060</fullName>
        <ecNumber evidence="4">3.4.21.-</ecNumber>
    </recommendedName>
    <alternativeName>
        <fullName evidence="2">Trypsin-like protease 1</fullName>
    </alternativeName>
</protein>
<dbReference type="EC" id="3.4.21.-" evidence="4"/>
<dbReference type="EMBL" id="CP013140">
    <property type="protein sequence ID" value="ALN60085.1"/>
    <property type="molecule type" value="Genomic_DNA"/>
</dbReference>
<dbReference type="EMBL" id="MTAY01000035">
    <property type="protein sequence ID" value="OPD63339.1"/>
    <property type="molecule type" value="Genomic_DNA"/>
</dbReference>
<dbReference type="EMBL" id="CP040656">
    <property type="protein sequence ID" value="QCW28096.1"/>
    <property type="molecule type" value="Genomic_DNA"/>
</dbReference>
<dbReference type="STRING" id="69.GLE_4744"/>
<dbReference type="KEGG" id="lez:GLE_4744"/>
<dbReference type="PATRIC" id="fig|69.6.peg.4678"/>
<dbReference type="OrthoDB" id="9811262at2"/>
<dbReference type="Proteomes" id="UP000061569">
    <property type="component" value="Chromosome"/>
</dbReference>
<dbReference type="GO" id="GO:0008236">
    <property type="term" value="F:serine-type peptidase activity"/>
    <property type="evidence" value="ECO:0007669"/>
    <property type="project" value="UniProtKB-KW"/>
</dbReference>
<dbReference type="GO" id="GO:0051607">
    <property type="term" value="P:defense response to virus"/>
    <property type="evidence" value="ECO:0007669"/>
    <property type="project" value="UniProtKB-KW"/>
</dbReference>
<dbReference type="GO" id="GO:0006508">
    <property type="term" value="P:proteolysis"/>
    <property type="evidence" value="ECO:0007669"/>
    <property type="project" value="UniProtKB-KW"/>
</dbReference>
<dbReference type="Gene3D" id="2.40.10.10">
    <property type="entry name" value="Trypsin-like serine proteases"/>
    <property type="match status" value="1"/>
</dbReference>
<dbReference type="InterPro" id="IPR009003">
    <property type="entry name" value="Peptidase_S1_PA"/>
</dbReference>
<dbReference type="InterPro" id="IPR043504">
    <property type="entry name" value="Peptidase_S1_PA_chymotrypsin"/>
</dbReference>
<dbReference type="Pfam" id="PF13365">
    <property type="entry name" value="Trypsin_2"/>
    <property type="match status" value="1"/>
</dbReference>
<dbReference type="SUPFAM" id="SSF50494">
    <property type="entry name" value="Trypsin-like serine proteases"/>
    <property type="match status" value="1"/>
</dbReference>
<name>PROT1_LYSEN</name>
<gene>
    <name evidence="6" type="ORF">BV903_13690</name>
    <name evidence="7" type="ORF">FE772_23060</name>
    <name evidence="2" type="ORF">Ga0399710_4914</name>
    <name evidence="5" type="ORF">GLE_4744</name>
</gene>